<proteinExistence type="evidence at protein level"/>
<protein>
    <recommendedName>
        <fullName>Ferredoxin--NADP reductase</fullName>
        <shortName>FNR</shortName>
        <shortName>Fd-NADP(+) reductase</shortName>
        <ecNumber>1.18.1.2</ecNumber>
    </recommendedName>
</protein>
<accession>Q8KCB2</accession>
<feature type="chain" id="PRO_0000364821" description="Ferredoxin--NADP reductase">
    <location>
        <begin position="1"/>
        <end position="360"/>
    </location>
</feature>
<feature type="binding site" evidence="1">
    <location>
        <position position="25"/>
    </location>
    <ligand>
        <name>FAD</name>
        <dbReference type="ChEBI" id="CHEBI:57692"/>
    </ligand>
</feature>
<feature type="binding site" evidence="1">
    <location>
        <position position="44"/>
    </location>
    <ligand>
        <name>FAD</name>
        <dbReference type="ChEBI" id="CHEBI:57692"/>
    </ligand>
</feature>
<feature type="binding site" evidence="1">
    <location>
        <position position="52"/>
    </location>
    <ligand>
        <name>FAD</name>
        <dbReference type="ChEBI" id="CHEBI:57692"/>
    </ligand>
</feature>
<feature type="binding site" evidence="1">
    <location>
        <position position="57"/>
    </location>
    <ligand>
        <name>FAD</name>
        <dbReference type="ChEBI" id="CHEBI:57692"/>
    </ligand>
</feature>
<feature type="binding site" evidence="1">
    <location>
        <position position="97"/>
    </location>
    <ligand>
        <name>FAD</name>
        <dbReference type="ChEBI" id="CHEBI:57692"/>
    </ligand>
</feature>
<feature type="binding site" evidence="1">
    <location>
        <position position="132"/>
    </location>
    <ligand>
        <name>FAD</name>
        <dbReference type="ChEBI" id="CHEBI:57692"/>
    </ligand>
</feature>
<feature type="binding site" evidence="1">
    <location>
        <position position="298"/>
    </location>
    <ligand>
        <name>FAD</name>
        <dbReference type="ChEBI" id="CHEBI:57692"/>
    </ligand>
</feature>
<feature type="binding site" evidence="1">
    <location>
        <position position="339"/>
    </location>
    <ligand>
        <name>FAD</name>
        <dbReference type="ChEBI" id="CHEBI:57692"/>
    </ligand>
</feature>
<feature type="strand" evidence="4">
    <location>
        <begin position="15"/>
        <end position="20"/>
    </location>
</feature>
<feature type="helix" evidence="4">
    <location>
        <begin position="24"/>
        <end position="35"/>
    </location>
</feature>
<feature type="strand" evidence="4">
    <location>
        <begin position="40"/>
        <end position="43"/>
    </location>
</feature>
<feature type="strand" evidence="4">
    <location>
        <begin position="45"/>
        <end position="49"/>
    </location>
</feature>
<feature type="helix" evidence="4">
    <location>
        <begin position="51"/>
        <end position="55"/>
    </location>
</feature>
<feature type="strand" evidence="4">
    <location>
        <begin position="60"/>
        <end position="62"/>
    </location>
</feature>
<feature type="strand" evidence="4">
    <location>
        <begin position="69"/>
        <end position="72"/>
    </location>
</feature>
<feature type="helix" evidence="4">
    <location>
        <begin position="73"/>
        <end position="85"/>
    </location>
</feature>
<feature type="strand" evidence="4">
    <location>
        <begin position="90"/>
        <end position="92"/>
    </location>
</feature>
<feature type="strand" evidence="4">
    <location>
        <begin position="97"/>
        <end position="102"/>
    </location>
</feature>
<feature type="strand" evidence="4">
    <location>
        <begin position="108"/>
        <end position="112"/>
    </location>
</feature>
<feature type="strand" evidence="4">
    <location>
        <begin position="117"/>
        <end position="125"/>
    </location>
</feature>
<feature type="helix" evidence="4">
    <location>
        <begin position="138"/>
        <end position="140"/>
    </location>
</feature>
<feature type="turn" evidence="4">
    <location>
        <begin position="144"/>
        <end position="146"/>
    </location>
</feature>
<feature type="turn" evidence="4">
    <location>
        <begin position="148"/>
        <end position="150"/>
    </location>
</feature>
<feature type="strand" evidence="4">
    <location>
        <begin position="151"/>
        <end position="154"/>
    </location>
</feature>
<feature type="helix" evidence="4">
    <location>
        <begin position="158"/>
        <end position="161"/>
    </location>
</feature>
<feature type="strand" evidence="4">
    <location>
        <begin position="165"/>
        <end position="169"/>
    </location>
</feature>
<feature type="helix" evidence="4">
    <location>
        <begin position="173"/>
        <end position="181"/>
    </location>
</feature>
<feature type="turn" evidence="4">
    <location>
        <begin position="182"/>
        <end position="185"/>
    </location>
</feature>
<feature type="strand" evidence="4">
    <location>
        <begin position="186"/>
        <end position="192"/>
    </location>
</feature>
<feature type="strand" evidence="4">
    <location>
        <begin position="194"/>
        <end position="197"/>
    </location>
</feature>
<feature type="helix" evidence="4">
    <location>
        <begin position="203"/>
        <end position="206"/>
    </location>
</feature>
<feature type="helix" evidence="4">
    <location>
        <begin position="209"/>
        <end position="213"/>
    </location>
</feature>
<feature type="strand" evidence="4">
    <location>
        <begin position="216"/>
        <end position="231"/>
    </location>
</feature>
<feature type="strand" evidence="4">
    <location>
        <begin position="234"/>
        <end position="242"/>
    </location>
</feature>
<feature type="strand" evidence="4">
    <location>
        <begin position="247"/>
        <end position="251"/>
    </location>
</feature>
<feature type="strand" evidence="4">
    <location>
        <begin position="253"/>
        <end position="257"/>
    </location>
</feature>
<feature type="helix" evidence="4">
    <location>
        <begin position="266"/>
        <end position="270"/>
    </location>
</feature>
<feature type="strand" evidence="4">
    <location>
        <begin position="279"/>
        <end position="281"/>
    </location>
</feature>
<feature type="strand" evidence="4">
    <location>
        <begin position="293"/>
        <end position="295"/>
    </location>
</feature>
<feature type="helix" evidence="4">
    <location>
        <begin position="309"/>
        <end position="327"/>
    </location>
</feature>
<feature type="helix" evidence="4">
    <location>
        <begin position="338"/>
        <end position="347"/>
    </location>
</feature>
<gene>
    <name type="ordered locus">CT1512</name>
</gene>
<dbReference type="EC" id="1.18.1.2"/>
<dbReference type="EMBL" id="AE006470">
    <property type="protein sequence ID" value="AAM72739.1"/>
    <property type="molecule type" value="Genomic_DNA"/>
</dbReference>
<dbReference type="RefSeq" id="NP_662397.1">
    <property type="nucleotide sequence ID" value="NC_002932.3"/>
</dbReference>
<dbReference type="RefSeq" id="WP_010933178.1">
    <property type="nucleotide sequence ID" value="NC_002932.3"/>
</dbReference>
<dbReference type="PDB" id="3AB1">
    <property type="method" value="X-ray"/>
    <property type="resolution" value="2.39 A"/>
    <property type="chains" value="A/B=1-360"/>
</dbReference>
<dbReference type="PDBsum" id="3AB1"/>
<dbReference type="SMR" id="Q8KCB2"/>
<dbReference type="STRING" id="194439.CT1512"/>
<dbReference type="EnsemblBacteria" id="AAM72739">
    <property type="protein sequence ID" value="AAM72739"/>
    <property type="gene ID" value="CT1512"/>
</dbReference>
<dbReference type="KEGG" id="cte:CT1512"/>
<dbReference type="PATRIC" id="fig|194439.7.peg.1372"/>
<dbReference type="eggNOG" id="COG0492">
    <property type="taxonomic scope" value="Bacteria"/>
</dbReference>
<dbReference type="HOGENOM" id="CLU_031864_5_5_10"/>
<dbReference type="OrthoDB" id="9806179at2"/>
<dbReference type="BRENDA" id="1.18.1.2">
    <property type="organism ID" value="1345"/>
</dbReference>
<dbReference type="EvolutionaryTrace" id="Q8KCB2"/>
<dbReference type="Proteomes" id="UP000001007">
    <property type="component" value="Chromosome"/>
</dbReference>
<dbReference type="GO" id="GO:0004324">
    <property type="term" value="F:ferredoxin-NADP+ reductase activity"/>
    <property type="evidence" value="ECO:0007669"/>
    <property type="project" value="UniProtKB-UniRule"/>
</dbReference>
<dbReference type="GO" id="GO:0050660">
    <property type="term" value="F:flavin adenine dinucleotide binding"/>
    <property type="evidence" value="ECO:0007669"/>
    <property type="project" value="UniProtKB-UniRule"/>
</dbReference>
<dbReference type="GO" id="GO:0050661">
    <property type="term" value="F:NADP binding"/>
    <property type="evidence" value="ECO:0007669"/>
    <property type="project" value="UniProtKB-UniRule"/>
</dbReference>
<dbReference type="Gene3D" id="3.50.50.60">
    <property type="entry name" value="FAD/NAD(P)-binding domain"/>
    <property type="match status" value="2"/>
</dbReference>
<dbReference type="HAMAP" id="MF_01685">
    <property type="entry name" value="FENR2"/>
    <property type="match status" value="1"/>
</dbReference>
<dbReference type="InterPro" id="IPR036188">
    <property type="entry name" value="FAD/NAD-bd_sf"/>
</dbReference>
<dbReference type="InterPro" id="IPR023753">
    <property type="entry name" value="FAD/NAD-binding_dom"/>
</dbReference>
<dbReference type="InterPro" id="IPR022890">
    <property type="entry name" value="Fd--NADP_Rdtase_type_2"/>
</dbReference>
<dbReference type="InterPro" id="IPR050097">
    <property type="entry name" value="Ferredoxin-NADP_redctase_2"/>
</dbReference>
<dbReference type="PANTHER" id="PTHR48105">
    <property type="entry name" value="THIOREDOXIN REDUCTASE 1-RELATED-RELATED"/>
    <property type="match status" value="1"/>
</dbReference>
<dbReference type="Pfam" id="PF07992">
    <property type="entry name" value="Pyr_redox_2"/>
    <property type="match status" value="1"/>
</dbReference>
<dbReference type="PRINTS" id="PR00368">
    <property type="entry name" value="FADPNR"/>
</dbReference>
<dbReference type="PRINTS" id="PR00469">
    <property type="entry name" value="PNDRDTASEII"/>
</dbReference>
<dbReference type="SUPFAM" id="SSF51905">
    <property type="entry name" value="FAD/NAD(P)-binding domain"/>
    <property type="match status" value="1"/>
</dbReference>
<evidence type="ECO:0000250" key="1"/>
<evidence type="ECO:0000269" key="2">
    <source>
    </source>
</evidence>
<evidence type="ECO:0000305" key="3"/>
<evidence type="ECO:0007829" key="4">
    <source>
        <dbReference type="PDB" id="3AB1"/>
    </source>
</evidence>
<keyword id="KW-0002">3D-structure</keyword>
<keyword id="KW-0903">Direct protein sequencing</keyword>
<keyword id="KW-0274">FAD</keyword>
<keyword id="KW-0285">Flavoprotein</keyword>
<keyword id="KW-0521">NADP</keyword>
<keyword id="KW-0560">Oxidoreductase</keyword>
<keyword id="KW-1185">Reference proteome</keyword>
<sequence>MLDIHNPATDHHDMRDLTIIGGGPTGIFAAFQCGMNNISCRIIESMPQLGGQLAALYPEKHIYDVAGFPEVPAIDLVESLWAQAERYNPDVVLNETVTKYTKLDDGTFETRTNTGNVYRSRAVLIAAGLGAFEPRKLPQLGNIDHLTGSSVYYAVKSVEDFKGKRVVIVGGGDSALDWTVGLIKNAASVTLVHRGHEFQGHGKTAHEVERARANGTIDVYLETEVASIEESNGVLTRVHLRSSDGSKWTVEADRLLILIGFKSNLGPLARWDLELYENALVVDSHMKTSVDGLYAAGDIAYYPGKLKIIQTGLSEATMAVRHSLSYIKPGEKIRNVFSSVKMAKEKKAAEAGNATENKAE</sequence>
<name>FENR_CHLTE</name>
<comment type="catalytic activity">
    <reaction evidence="2">
        <text>2 reduced [2Fe-2S]-[ferredoxin] + NADP(+) + H(+) = 2 oxidized [2Fe-2S]-[ferredoxin] + NADPH</text>
        <dbReference type="Rhea" id="RHEA:20125"/>
        <dbReference type="Rhea" id="RHEA-COMP:10000"/>
        <dbReference type="Rhea" id="RHEA-COMP:10001"/>
        <dbReference type="ChEBI" id="CHEBI:15378"/>
        <dbReference type="ChEBI" id="CHEBI:33737"/>
        <dbReference type="ChEBI" id="CHEBI:33738"/>
        <dbReference type="ChEBI" id="CHEBI:57783"/>
        <dbReference type="ChEBI" id="CHEBI:58349"/>
        <dbReference type="EC" id="1.18.1.2"/>
    </reaction>
</comment>
<comment type="cofactor">
    <cofactor evidence="2">
        <name>FAD</name>
        <dbReference type="ChEBI" id="CHEBI:57692"/>
    </cofactor>
    <text evidence="2">Binds 1 FAD per subunit.</text>
</comment>
<comment type="subunit">
    <text evidence="2">Homodimer.</text>
</comment>
<comment type="similarity">
    <text evidence="3">Belongs to the ferredoxin--NADP reductase type 2 family.</text>
</comment>
<reference key="1">
    <citation type="journal article" date="2002" name="Proc. Natl. Acad. Sci. U.S.A.">
        <title>The complete genome sequence of Chlorobium tepidum TLS, a photosynthetic, anaerobic, green-sulfur bacterium.</title>
        <authorList>
            <person name="Eisen J.A."/>
            <person name="Nelson K.E."/>
            <person name="Paulsen I.T."/>
            <person name="Heidelberg J.F."/>
            <person name="Wu M."/>
            <person name="Dodson R.J."/>
            <person name="DeBoy R.T."/>
            <person name="Gwinn M.L."/>
            <person name="Nelson W.C."/>
            <person name="Haft D.H."/>
            <person name="Hickey E.K."/>
            <person name="Peterson J.D."/>
            <person name="Durkin A.S."/>
            <person name="Kolonay J.F."/>
            <person name="Yang F."/>
            <person name="Holt I.E."/>
            <person name="Umayam L.A."/>
            <person name="Mason T.M."/>
            <person name="Brenner M."/>
            <person name="Shea T.P."/>
            <person name="Parksey D.S."/>
            <person name="Nierman W.C."/>
            <person name="Feldblyum T.V."/>
            <person name="Hansen C.L."/>
            <person name="Craven M.B."/>
            <person name="Radune D."/>
            <person name="Vamathevan J.J."/>
            <person name="Khouri H.M."/>
            <person name="White O."/>
            <person name="Gruber T.M."/>
            <person name="Ketchum K.A."/>
            <person name="Venter J.C."/>
            <person name="Tettelin H."/>
            <person name="Bryant D.A."/>
            <person name="Fraser C.M."/>
        </authorList>
    </citation>
    <scope>NUCLEOTIDE SEQUENCE [LARGE SCALE GENOMIC DNA]</scope>
    <source>
        <strain>ATCC 49652 / DSM 12025 / NBRC 103806 / TLS</strain>
    </source>
</reference>
<reference key="2">
    <citation type="journal article" date="2002" name="Biochim. Biophys. Acta">
        <title>Purification and characterization of ferredoxin-NAD(P)(+) reductase from the green sulfur bacterium Chlorobium tepidum.</title>
        <authorList>
            <person name="Seo D."/>
            <person name="Sakurai H."/>
        </authorList>
    </citation>
    <scope>PROTEIN SEQUENCE OF 1-25</scope>
    <scope>CATALYTIC ACTIVITY</scope>
    <scope>SUBUNIT</scope>
    <scope>COFACTOR</scope>
</reference>
<organism>
    <name type="scientific">Chlorobaculum tepidum (strain ATCC 49652 / DSM 12025 / NBRC 103806 / TLS)</name>
    <name type="common">Chlorobium tepidum</name>
    <dbReference type="NCBI Taxonomy" id="194439"/>
    <lineage>
        <taxon>Bacteria</taxon>
        <taxon>Pseudomonadati</taxon>
        <taxon>Chlorobiota</taxon>
        <taxon>Chlorobiia</taxon>
        <taxon>Chlorobiales</taxon>
        <taxon>Chlorobiaceae</taxon>
        <taxon>Chlorobaculum</taxon>
    </lineage>
</organism>